<keyword id="KW-0378">Hydrolase</keyword>
<keyword id="KW-0479">Metal-binding</keyword>
<keyword id="KW-0862">Zinc</keyword>
<sequence length="309" mass="32837">MIARFAPALAAVSPALHTALAPLLDHHAFAGWLSAPQVKELMQAGGLDEDALCFTLLPLAAAYAVTPLSHFNVGAIACGISGNLYFGANMEFLAAPLQQTVHAEQSAIAHAWLRGEKRLRALTVNYTPCGHCRQFMNELNSGTDLIICLPERSAATLASYLPDAFGPRDLAIQSLLLDEIDHAFAAAAWLDHDLSAPSPDDNDPLVSTALDAASRSHAPYSQSHSGVALQTQDGCVYAGRYAENAAFNPSLPPLQTALILMNAAGADDRQIRRAVLAERQNAPITQWPATNATLAALGCHEVHHLSLSL</sequence>
<accession>Q2NUD2</accession>
<comment type="function">
    <text evidence="1">This enzyme scavenges exogenous and endogenous cytidine and 2'-deoxycytidine for UMP synthesis.</text>
</comment>
<comment type="catalytic activity">
    <reaction evidence="1">
        <text>cytidine + H2O + H(+) = uridine + NH4(+)</text>
        <dbReference type="Rhea" id="RHEA:16069"/>
        <dbReference type="ChEBI" id="CHEBI:15377"/>
        <dbReference type="ChEBI" id="CHEBI:15378"/>
        <dbReference type="ChEBI" id="CHEBI:16704"/>
        <dbReference type="ChEBI" id="CHEBI:17562"/>
        <dbReference type="ChEBI" id="CHEBI:28938"/>
        <dbReference type="EC" id="3.5.4.5"/>
    </reaction>
</comment>
<comment type="catalytic activity">
    <reaction evidence="1">
        <text>2'-deoxycytidine + H2O + H(+) = 2'-deoxyuridine + NH4(+)</text>
        <dbReference type="Rhea" id="RHEA:13433"/>
        <dbReference type="ChEBI" id="CHEBI:15377"/>
        <dbReference type="ChEBI" id="CHEBI:15378"/>
        <dbReference type="ChEBI" id="CHEBI:15698"/>
        <dbReference type="ChEBI" id="CHEBI:16450"/>
        <dbReference type="ChEBI" id="CHEBI:28938"/>
        <dbReference type="EC" id="3.5.4.5"/>
    </reaction>
</comment>
<comment type="cofactor">
    <cofactor evidence="1">
        <name>Zn(2+)</name>
        <dbReference type="ChEBI" id="CHEBI:29105"/>
    </cofactor>
    <text evidence="1">Binds 1 zinc ion.</text>
</comment>
<comment type="subunit">
    <text evidence="1">Homodimer.</text>
</comment>
<comment type="similarity">
    <text evidence="1">Belongs to the cytidine and deoxycytidylate deaminase family.</text>
</comment>
<dbReference type="EC" id="3.5.4.5" evidence="1"/>
<dbReference type="EMBL" id="AP008232">
    <property type="protein sequence ID" value="BAE74243.1"/>
    <property type="molecule type" value="Genomic_DNA"/>
</dbReference>
<dbReference type="RefSeq" id="WP_011410829.1">
    <property type="nucleotide sequence ID" value="NC_007712.1"/>
</dbReference>
<dbReference type="SMR" id="Q2NUD2"/>
<dbReference type="STRING" id="343509.SG0968"/>
<dbReference type="KEGG" id="sgl:SG0968"/>
<dbReference type="eggNOG" id="COG0295">
    <property type="taxonomic scope" value="Bacteria"/>
</dbReference>
<dbReference type="HOGENOM" id="CLU_052424_0_0_6"/>
<dbReference type="OrthoDB" id="9795347at2"/>
<dbReference type="Proteomes" id="UP000001932">
    <property type="component" value="Chromosome"/>
</dbReference>
<dbReference type="GO" id="GO:0005829">
    <property type="term" value="C:cytosol"/>
    <property type="evidence" value="ECO:0007669"/>
    <property type="project" value="TreeGrafter"/>
</dbReference>
<dbReference type="GO" id="GO:0004126">
    <property type="term" value="F:cytidine deaminase activity"/>
    <property type="evidence" value="ECO:0007669"/>
    <property type="project" value="UniProtKB-UniRule"/>
</dbReference>
<dbReference type="GO" id="GO:0042802">
    <property type="term" value="F:identical protein binding"/>
    <property type="evidence" value="ECO:0007669"/>
    <property type="project" value="UniProtKB-ARBA"/>
</dbReference>
<dbReference type="GO" id="GO:0008270">
    <property type="term" value="F:zinc ion binding"/>
    <property type="evidence" value="ECO:0007669"/>
    <property type="project" value="UniProtKB-UniRule"/>
</dbReference>
<dbReference type="GO" id="GO:0009972">
    <property type="term" value="P:cytidine deamination"/>
    <property type="evidence" value="ECO:0007669"/>
    <property type="project" value="InterPro"/>
</dbReference>
<dbReference type="CDD" id="cd01283">
    <property type="entry name" value="cytidine_deaminase"/>
    <property type="match status" value="2"/>
</dbReference>
<dbReference type="FunFam" id="3.40.140.10:FF:000007">
    <property type="entry name" value="Cytidine deaminase"/>
    <property type="match status" value="1"/>
</dbReference>
<dbReference type="Gene3D" id="3.40.140.10">
    <property type="entry name" value="Cytidine Deaminase, domain 2"/>
    <property type="match status" value="2"/>
</dbReference>
<dbReference type="HAMAP" id="MF_01558">
    <property type="entry name" value="Cyt_deam"/>
    <property type="match status" value="1"/>
</dbReference>
<dbReference type="InterPro" id="IPR016192">
    <property type="entry name" value="APOBEC/CMP_deaminase_Zn-bd"/>
</dbReference>
<dbReference type="InterPro" id="IPR002125">
    <property type="entry name" value="CMP_dCMP_dom"/>
</dbReference>
<dbReference type="InterPro" id="IPR013171">
    <property type="entry name" value="Cyd/dCyd_deaminase_Zn-bd"/>
</dbReference>
<dbReference type="InterPro" id="IPR050202">
    <property type="entry name" value="Cyt/Deoxycyt_deaminase"/>
</dbReference>
<dbReference type="InterPro" id="IPR006263">
    <property type="entry name" value="Cyt_deam_dimer"/>
</dbReference>
<dbReference type="InterPro" id="IPR016193">
    <property type="entry name" value="Cytidine_deaminase-like"/>
</dbReference>
<dbReference type="InterPro" id="IPR020797">
    <property type="entry name" value="Cytidine_deaminase_bacteria"/>
</dbReference>
<dbReference type="NCBIfam" id="TIGR01355">
    <property type="entry name" value="cyt_deam_dimer"/>
    <property type="match status" value="1"/>
</dbReference>
<dbReference type="NCBIfam" id="NF006537">
    <property type="entry name" value="PRK09027.1"/>
    <property type="match status" value="1"/>
</dbReference>
<dbReference type="PANTHER" id="PTHR11644">
    <property type="entry name" value="CYTIDINE DEAMINASE"/>
    <property type="match status" value="1"/>
</dbReference>
<dbReference type="PANTHER" id="PTHR11644:SF2">
    <property type="entry name" value="CYTIDINE DEAMINASE"/>
    <property type="match status" value="1"/>
</dbReference>
<dbReference type="Pfam" id="PF00383">
    <property type="entry name" value="dCMP_cyt_deam_1"/>
    <property type="match status" value="1"/>
</dbReference>
<dbReference type="Pfam" id="PF08211">
    <property type="entry name" value="dCMP_cyt_deam_2"/>
    <property type="match status" value="1"/>
</dbReference>
<dbReference type="PIRSF" id="PIRSF006334">
    <property type="entry name" value="Cdd_plus_pseudo"/>
    <property type="match status" value="1"/>
</dbReference>
<dbReference type="SUPFAM" id="SSF53927">
    <property type="entry name" value="Cytidine deaminase-like"/>
    <property type="match status" value="2"/>
</dbReference>
<dbReference type="PROSITE" id="PS00903">
    <property type="entry name" value="CYT_DCMP_DEAMINASES_1"/>
    <property type="match status" value="1"/>
</dbReference>
<dbReference type="PROSITE" id="PS51747">
    <property type="entry name" value="CYT_DCMP_DEAMINASES_2"/>
    <property type="match status" value="2"/>
</dbReference>
<evidence type="ECO:0000255" key="1">
    <source>
        <dbReference type="HAMAP-Rule" id="MF_01558"/>
    </source>
</evidence>
<evidence type="ECO:0000255" key="2">
    <source>
        <dbReference type="PROSITE-ProRule" id="PRU01083"/>
    </source>
</evidence>
<name>CDD_SODGM</name>
<organism>
    <name type="scientific">Sodalis glossinidius (strain morsitans)</name>
    <dbReference type="NCBI Taxonomy" id="343509"/>
    <lineage>
        <taxon>Bacteria</taxon>
        <taxon>Pseudomonadati</taxon>
        <taxon>Pseudomonadota</taxon>
        <taxon>Gammaproteobacteria</taxon>
        <taxon>Enterobacterales</taxon>
        <taxon>Bruguierivoracaceae</taxon>
        <taxon>Sodalis</taxon>
    </lineage>
</organism>
<protein>
    <recommendedName>
        <fullName evidence="1">Cytidine deaminase</fullName>
        <ecNumber evidence="1">3.5.4.5</ecNumber>
    </recommendedName>
    <alternativeName>
        <fullName evidence="1">Cytidine aminohydrolase</fullName>
        <shortName evidence="1">CDA</shortName>
    </alternativeName>
</protein>
<proteinExistence type="inferred from homology"/>
<reference key="1">
    <citation type="journal article" date="2006" name="Genome Res.">
        <title>Massive genome erosion and functional adaptations provide insights into the symbiotic lifestyle of Sodalis glossinidius in the tsetse host.</title>
        <authorList>
            <person name="Toh H."/>
            <person name="Weiss B.L."/>
            <person name="Perkin S.A.H."/>
            <person name="Yamashita A."/>
            <person name="Oshima K."/>
            <person name="Hattori M."/>
            <person name="Aksoy S."/>
        </authorList>
    </citation>
    <scope>NUCLEOTIDE SEQUENCE [LARGE SCALE GENOMIC DNA]</scope>
    <source>
        <strain>morsitans</strain>
    </source>
</reference>
<feature type="chain" id="PRO_1000068970" description="Cytidine deaminase">
    <location>
        <begin position="1"/>
        <end position="309"/>
    </location>
</feature>
<feature type="domain" description="CMP/dCMP-type deaminase 1" evidence="2">
    <location>
        <begin position="48"/>
        <end position="168"/>
    </location>
</feature>
<feature type="domain" description="CMP/dCMP-type deaminase 2" evidence="2">
    <location>
        <begin position="200"/>
        <end position="309"/>
    </location>
</feature>
<feature type="active site" description="Proton donor" evidence="1">
    <location>
        <position position="104"/>
    </location>
</feature>
<feature type="binding site" evidence="1">
    <location>
        <begin position="89"/>
        <end position="91"/>
    </location>
    <ligand>
        <name>substrate</name>
    </ligand>
</feature>
<feature type="binding site" evidence="1">
    <location>
        <position position="102"/>
    </location>
    <ligand>
        <name>Zn(2+)</name>
        <dbReference type="ChEBI" id="CHEBI:29105"/>
        <note>catalytic</note>
    </ligand>
</feature>
<feature type="binding site" evidence="1">
    <location>
        <position position="129"/>
    </location>
    <ligand>
        <name>Zn(2+)</name>
        <dbReference type="ChEBI" id="CHEBI:29105"/>
        <note>catalytic</note>
    </ligand>
</feature>
<feature type="binding site" evidence="1">
    <location>
        <position position="132"/>
    </location>
    <ligand>
        <name>Zn(2+)</name>
        <dbReference type="ChEBI" id="CHEBI:29105"/>
        <note>catalytic</note>
    </ligand>
</feature>
<gene>
    <name evidence="1" type="primary">cdd</name>
    <name type="ordered locus">SG0968</name>
</gene>